<feature type="signal peptide" evidence="1">
    <location>
        <begin position="1"/>
        <end position="23"/>
    </location>
</feature>
<feature type="chain" id="PRO_0000036282" description="UPF0312 protein PSPTO_5071">
    <location>
        <begin position="24"/>
        <end position="192"/>
    </location>
</feature>
<sequence length="192" mass="20633">MLKKSLAALALGTALLSAGQAMAADYVIDKEGQHAFVDFKISHLGYSFIHGTFKDWDGTFSFDAAKPEASKINVELKTASLFTNHAERDKHISSKDFLDVAKYPEAKFVSTAVKSTGEKTADVTGDLTLHGVTKPIVIKATFNGEGKDPWGGYRAGFNGTSTLNLNDFGIKGPGPTSQTLDLDITFEGVQKK</sequence>
<proteinExistence type="inferred from homology"/>
<name>Y5071_PSESM</name>
<keyword id="KW-0574">Periplasm</keyword>
<keyword id="KW-1185">Reference proteome</keyword>
<keyword id="KW-0732">Signal</keyword>
<reference key="1">
    <citation type="journal article" date="2003" name="Proc. Natl. Acad. Sci. U.S.A.">
        <title>The complete genome sequence of the Arabidopsis and tomato pathogen Pseudomonas syringae pv. tomato DC3000.</title>
        <authorList>
            <person name="Buell C.R."/>
            <person name="Joardar V."/>
            <person name="Lindeberg M."/>
            <person name="Selengut J."/>
            <person name="Paulsen I.T."/>
            <person name="Gwinn M.L."/>
            <person name="Dodson R.J."/>
            <person name="DeBoy R.T."/>
            <person name="Durkin A.S."/>
            <person name="Kolonay J.F."/>
            <person name="Madupu R."/>
            <person name="Daugherty S.C."/>
            <person name="Brinkac L.M."/>
            <person name="Beanan M.J."/>
            <person name="Haft D.H."/>
            <person name="Nelson W.C."/>
            <person name="Davidsen T.M."/>
            <person name="Zafar N."/>
            <person name="Zhou L."/>
            <person name="Liu J."/>
            <person name="Yuan Q."/>
            <person name="Khouri H.M."/>
            <person name="Fedorova N.B."/>
            <person name="Tran B."/>
            <person name="Russell D."/>
            <person name="Berry K.J."/>
            <person name="Utterback T.R."/>
            <person name="Van Aken S.E."/>
            <person name="Feldblyum T.V."/>
            <person name="D'Ascenzo M."/>
            <person name="Deng W.-L."/>
            <person name="Ramos A.R."/>
            <person name="Alfano J.R."/>
            <person name="Cartinhour S."/>
            <person name="Chatterjee A.K."/>
            <person name="Delaney T.P."/>
            <person name="Lazarowitz S.G."/>
            <person name="Martin G.B."/>
            <person name="Schneider D.J."/>
            <person name="Tang X."/>
            <person name="Bender C.L."/>
            <person name="White O."/>
            <person name="Fraser C.M."/>
            <person name="Collmer A."/>
        </authorList>
    </citation>
    <scope>NUCLEOTIDE SEQUENCE [LARGE SCALE GENOMIC DNA]</scope>
    <source>
        <strain>ATCC BAA-871 / DC3000</strain>
    </source>
</reference>
<gene>
    <name type="ordered locus">PSPTO_5071</name>
</gene>
<dbReference type="EMBL" id="AE016853">
    <property type="protein sequence ID" value="AAO58498.1"/>
    <property type="molecule type" value="Genomic_DNA"/>
</dbReference>
<dbReference type="RefSeq" id="NP_794803.1">
    <property type="nucleotide sequence ID" value="NC_004578.1"/>
</dbReference>
<dbReference type="RefSeq" id="WP_003378759.1">
    <property type="nucleotide sequence ID" value="NC_004578.1"/>
</dbReference>
<dbReference type="SMR" id="Q87V70"/>
<dbReference type="STRING" id="223283.PSPTO_5071"/>
<dbReference type="KEGG" id="pst:PSPTO_5071"/>
<dbReference type="PATRIC" id="fig|223283.9.peg.5193"/>
<dbReference type="eggNOG" id="COG2353">
    <property type="taxonomic scope" value="Bacteria"/>
</dbReference>
<dbReference type="HOGENOM" id="CLU_071003_1_2_6"/>
<dbReference type="OrthoDB" id="9811006at2"/>
<dbReference type="PhylomeDB" id="Q87V70"/>
<dbReference type="Proteomes" id="UP000002515">
    <property type="component" value="Chromosome"/>
</dbReference>
<dbReference type="GO" id="GO:0042597">
    <property type="term" value="C:periplasmic space"/>
    <property type="evidence" value="ECO:0007669"/>
    <property type="project" value="UniProtKB-SubCell"/>
</dbReference>
<dbReference type="Gene3D" id="2.40.128.110">
    <property type="entry name" value="Lipid/polyisoprenoid-binding, YceI-like"/>
    <property type="match status" value="1"/>
</dbReference>
<dbReference type="HAMAP" id="MF_00780">
    <property type="entry name" value="UPF0312"/>
    <property type="match status" value="1"/>
</dbReference>
<dbReference type="InterPro" id="IPR007372">
    <property type="entry name" value="Lipid/polyisoprenoid-bd_YceI"/>
</dbReference>
<dbReference type="InterPro" id="IPR036761">
    <property type="entry name" value="TTHA0802/YceI-like_sf"/>
</dbReference>
<dbReference type="InterPro" id="IPR023480">
    <property type="entry name" value="UPF0312/YceI"/>
</dbReference>
<dbReference type="NCBIfam" id="NF002994">
    <property type="entry name" value="PRK03757.1"/>
    <property type="match status" value="1"/>
</dbReference>
<dbReference type="PANTHER" id="PTHR34406">
    <property type="entry name" value="PROTEIN YCEI"/>
    <property type="match status" value="1"/>
</dbReference>
<dbReference type="PANTHER" id="PTHR34406:SF1">
    <property type="entry name" value="PROTEIN YCEI"/>
    <property type="match status" value="1"/>
</dbReference>
<dbReference type="Pfam" id="PF04264">
    <property type="entry name" value="YceI"/>
    <property type="match status" value="1"/>
</dbReference>
<dbReference type="SMART" id="SM00867">
    <property type="entry name" value="YceI"/>
    <property type="match status" value="1"/>
</dbReference>
<dbReference type="SUPFAM" id="SSF101874">
    <property type="entry name" value="YceI-like"/>
    <property type="match status" value="1"/>
</dbReference>
<comment type="subcellular location">
    <subcellularLocation>
        <location evidence="1">Periplasm</location>
    </subcellularLocation>
</comment>
<comment type="similarity">
    <text evidence="1">Belongs to the UPF0312 family. Type 1 subfamily.</text>
</comment>
<protein>
    <recommendedName>
        <fullName evidence="1">UPF0312 protein PSPTO_5071</fullName>
    </recommendedName>
</protein>
<organism>
    <name type="scientific">Pseudomonas syringae pv. tomato (strain ATCC BAA-871 / DC3000)</name>
    <dbReference type="NCBI Taxonomy" id="223283"/>
    <lineage>
        <taxon>Bacteria</taxon>
        <taxon>Pseudomonadati</taxon>
        <taxon>Pseudomonadota</taxon>
        <taxon>Gammaproteobacteria</taxon>
        <taxon>Pseudomonadales</taxon>
        <taxon>Pseudomonadaceae</taxon>
        <taxon>Pseudomonas</taxon>
    </lineage>
</organism>
<accession>Q87V70</accession>
<evidence type="ECO:0000255" key="1">
    <source>
        <dbReference type="HAMAP-Rule" id="MF_00780"/>
    </source>
</evidence>